<keyword id="KW-1003">Cell membrane</keyword>
<keyword id="KW-1015">Disulfide bond</keyword>
<keyword id="KW-0407">Ion channel</keyword>
<keyword id="KW-0406">Ion transport</keyword>
<keyword id="KW-0472">Membrane</keyword>
<keyword id="KW-1185">Reference proteome</keyword>
<keyword id="KW-0812">Transmembrane</keyword>
<keyword id="KW-1133">Transmembrane helix</keyword>
<keyword id="KW-0813">Transport</keyword>
<sequence length="323" mass="35823">MAALIAENFRFLSLFFKSKDVMIFNGLVALGTVGSQELFSVVAFHCPCSPARNYLYGLTAIGVPALALFLIGVILNNHTWNLVAECQYRRAKNCSAAPNFLLLSSILGRAAVAPVTWSVISLLRGEAYVCALSEFVDPSSLTAGDKGFPPAHATEVLARFPCGEGPANLSSFREEVSRRLKYESQLFGWLLIGVVAILVFLTKCLKHYCSPLSYRQEAYWAQYRTNEDQLFQRTAEVHSRVLAANNVRRFFGFVALNKDDEELVAKFPVEGTQPRPQWNAITGVYLYRENQGLPLYSRLHKWAQGLTGNGTAPDNVEMALLTA</sequence>
<accession>Q8VEC4</accession>
<accession>Q3TDQ7</accession>
<accession>Q8BT85</accession>
<accession>Q8C246</accession>
<protein>
    <recommendedName>
        <fullName>Calcium homeostasis modulator protein 2</fullName>
    </recommendedName>
    <alternativeName>
        <fullName>Protein FAM26B</fullName>
    </alternativeName>
</protein>
<name>CAHM2_MOUSE</name>
<reference key="1">
    <citation type="journal article" date="2005" name="Science">
        <title>The transcriptional landscape of the mammalian genome.</title>
        <authorList>
            <person name="Carninci P."/>
            <person name="Kasukawa T."/>
            <person name="Katayama S."/>
            <person name="Gough J."/>
            <person name="Frith M.C."/>
            <person name="Maeda N."/>
            <person name="Oyama R."/>
            <person name="Ravasi T."/>
            <person name="Lenhard B."/>
            <person name="Wells C."/>
            <person name="Kodzius R."/>
            <person name="Shimokawa K."/>
            <person name="Bajic V.B."/>
            <person name="Brenner S.E."/>
            <person name="Batalov S."/>
            <person name="Forrest A.R."/>
            <person name="Zavolan M."/>
            <person name="Davis M.J."/>
            <person name="Wilming L.G."/>
            <person name="Aidinis V."/>
            <person name="Allen J.E."/>
            <person name="Ambesi-Impiombato A."/>
            <person name="Apweiler R."/>
            <person name="Aturaliya R.N."/>
            <person name="Bailey T.L."/>
            <person name="Bansal M."/>
            <person name="Baxter L."/>
            <person name="Beisel K.W."/>
            <person name="Bersano T."/>
            <person name="Bono H."/>
            <person name="Chalk A.M."/>
            <person name="Chiu K.P."/>
            <person name="Choudhary V."/>
            <person name="Christoffels A."/>
            <person name="Clutterbuck D.R."/>
            <person name="Crowe M.L."/>
            <person name="Dalla E."/>
            <person name="Dalrymple B.P."/>
            <person name="de Bono B."/>
            <person name="Della Gatta G."/>
            <person name="di Bernardo D."/>
            <person name="Down T."/>
            <person name="Engstrom P."/>
            <person name="Fagiolini M."/>
            <person name="Faulkner G."/>
            <person name="Fletcher C.F."/>
            <person name="Fukushima T."/>
            <person name="Furuno M."/>
            <person name="Futaki S."/>
            <person name="Gariboldi M."/>
            <person name="Georgii-Hemming P."/>
            <person name="Gingeras T.R."/>
            <person name="Gojobori T."/>
            <person name="Green R.E."/>
            <person name="Gustincich S."/>
            <person name="Harbers M."/>
            <person name="Hayashi Y."/>
            <person name="Hensch T.K."/>
            <person name="Hirokawa N."/>
            <person name="Hill D."/>
            <person name="Huminiecki L."/>
            <person name="Iacono M."/>
            <person name="Ikeo K."/>
            <person name="Iwama A."/>
            <person name="Ishikawa T."/>
            <person name="Jakt M."/>
            <person name="Kanapin A."/>
            <person name="Katoh M."/>
            <person name="Kawasawa Y."/>
            <person name="Kelso J."/>
            <person name="Kitamura H."/>
            <person name="Kitano H."/>
            <person name="Kollias G."/>
            <person name="Krishnan S.P."/>
            <person name="Kruger A."/>
            <person name="Kummerfeld S.K."/>
            <person name="Kurochkin I.V."/>
            <person name="Lareau L.F."/>
            <person name="Lazarevic D."/>
            <person name="Lipovich L."/>
            <person name="Liu J."/>
            <person name="Liuni S."/>
            <person name="McWilliam S."/>
            <person name="Madan Babu M."/>
            <person name="Madera M."/>
            <person name="Marchionni L."/>
            <person name="Matsuda H."/>
            <person name="Matsuzawa S."/>
            <person name="Miki H."/>
            <person name="Mignone F."/>
            <person name="Miyake S."/>
            <person name="Morris K."/>
            <person name="Mottagui-Tabar S."/>
            <person name="Mulder N."/>
            <person name="Nakano N."/>
            <person name="Nakauchi H."/>
            <person name="Ng P."/>
            <person name="Nilsson R."/>
            <person name="Nishiguchi S."/>
            <person name="Nishikawa S."/>
            <person name="Nori F."/>
            <person name="Ohara O."/>
            <person name="Okazaki Y."/>
            <person name="Orlando V."/>
            <person name="Pang K.C."/>
            <person name="Pavan W.J."/>
            <person name="Pavesi G."/>
            <person name="Pesole G."/>
            <person name="Petrovsky N."/>
            <person name="Piazza S."/>
            <person name="Reed J."/>
            <person name="Reid J.F."/>
            <person name="Ring B.Z."/>
            <person name="Ringwald M."/>
            <person name="Rost B."/>
            <person name="Ruan Y."/>
            <person name="Salzberg S.L."/>
            <person name="Sandelin A."/>
            <person name="Schneider C."/>
            <person name="Schoenbach C."/>
            <person name="Sekiguchi K."/>
            <person name="Semple C.A."/>
            <person name="Seno S."/>
            <person name="Sessa L."/>
            <person name="Sheng Y."/>
            <person name="Shibata Y."/>
            <person name="Shimada H."/>
            <person name="Shimada K."/>
            <person name="Silva D."/>
            <person name="Sinclair B."/>
            <person name="Sperling S."/>
            <person name="Stupka E."/>
            <person name="Sugiura K."/>
            <person name="Sultana R."/>
            <person name="Takenaka Y."/>
            <person name="Taki K."/>
            <person name="Tammoja K."/>
            <person name="Tan S.L."/>
            <person name="Tang S."/>
            <person name="Taylor M.S."/>
            <person name="Tegner J."/>
            <person name="Teichmann S.A."/>
            <person name="Ueda H.R."/>
            <person name="van Nimwegen E."/>
            <person name="Verardo R."/>
            <person name="Wei C.L."/>
            <person name="Yagi K."/>
            <person name="Yamanishi H."/>
            <person name="Zabarovsky E."/>
            <person name="Zhu S."/>
            <person name="Zimmer A."/>
            <person name="Hide W."/>
            <person name="Bult C."/>
            <person name="Grimmond S.M."/>
            <person name="Teasdale R.D."/>
            <person name="Liu E.T."/>
            <person name="Brusic V."/>
            <person name="Quackenbush J."/>
            <person name="Wahlestedt C."/>
            <person name="Mattick J.S."/>
            <person name="Hume D.A."/>
            <person name="Kai C."/>
            <person name="Sasaki D."/>
            <person name="Tomaru Y."/>
            <person name="Fukuda S."/>
            <person name="Kanamori-Katayama M."/>
            <person name="Suzuki M."/>
            <person name="Aoki J."/>
            <person name="Arakawa T."/>
            <person name="Iida J."/>
            <person name="Imamura K."/>
            <person name="Itoh M."/>
            <person name="Kato T."/>
            <person name="Kawaji H."/>
            <person name="Kawagashira N."/>
            <person name="Kawashima T."/>
            <person name="Kojima M."/>
            <person name="Kondo S."/>
            <person name="Konno H."/>
            <person name="Nakano K."/>
            <person name="Ninomiya N."/>
            <person name="Nishio T."/>
            <person name="Okada M."/>
            <person name="Plessy C."/>
            <person name="Shibata K."/>
            <person name="Shiraki T."/>
            <person name="Suzuki S."/>
            <person name="Tagami M."/>
            <person name="Waki K."/>
            <person name="Watahiki A."/>
            <person name="Okamura-Oho Y."/>
            <person name="Suzuki H."/>
            <person name="Kawai J."/>
            <person name="Hayashizaki Y."/>
        </authorList>
    </citation>
    <scope>NUCLEOTIDE SEQUENCE [LARGE SCALE MRNA]</scope>
    <source>
        <strain>NOD</strain>
    </source>
</reference>
<reference key="2">
    <citation type="journal article" date="2004" name="Genome Res.">
        <title>The status, quality, and expansion of the NIH full-length cDNA project: the Mammalian Gene Collection (MGC).</title>
        <authorList>
            <consortium name="The MGC Project Team"/>
        </authorList>
    </citation>
    <scope>NUCLEOTIDE SEQUENCE [LARGE SCALE MRNA]</scope>
    <source>
        <strain>Czech II</strain>
        <tissue>Mammary tumor</tissue>
    </source>
</reference>
<reference key="3">
    <citation type="journal article" date="2018" name="Mol. Psychiatry">
        <title>Calhm2 governs astrocytic ATP releasing in the development of depression-like behaviors.</title>
        <authorList>
            <person name="Ma J."/>
            <person name="Qi X."/>
            <person name="Yang C."/>
            <person name="Pan R."/>
            <person name="Wang S."/>
            <person name="Wu J."/>
            <person name="Huang L."/>
            <person name="Chen H."/>
            <person name="Cheng J."/>
            <person name="Wu R."/>
            <person name="Liao Y."/>
            <person name="Mao L."/>
            <person name="Wang F.C."/>
            <person name="Wu Z."/>
            <person name="An J.X."/>
            <person name="Wang Y."/>
            <person name="Zhang X."/>
            <person name="Zhang C."/>
            <person name="Yuan Z."/>
        </authorList>
    </citation>
    <scope>FUNCTION</scope>
    <scope>TRANSPORTER ACTIVITY</scope>
    <scope>ACTIVITY REGULATION</scope>
    <scope>SUBCELLULAR LOCATION</scope>
    <scope>DISRUPTION PHENOTYPE</scope>
    <scope>MUTAGENESIS OF GLN-87; LEU-103; SER-105 AND LEU-132</scope>
</reference>
<reference key="4">
    <citation type="journal article" date="2021" name="Sci. Adv.">
        <title>Microglial Calhm2 regulates neuroinflammation and contributes to Alzheimer's disease pathology.</title>
        <authorList>
            <person name="Cheng J."/>
            <person name="Dong Y."/>
            <person name="Ma J."/>
            <person name="Pan R."/>
            <person name="Liao Y."/>
            <person name="Kong X."/>
            <person name="Li X."/>
            <person name="Li S."/>
            <person name="Chen P."/>
            <person name="Wang L."/>
            <person name="Yu Y."/>
            <person name="Yuan Z."/>
        </authorList>
    </citation>
    <scope>FUNCTION</scope>
    <scope>TISSUE SPECIFICITY</scope>
    <scope>DISRUPTION PHENOTYPE</scope>
</reference>
<dbReference type="EMBL" id="AK012923">
    <property type="protein sequence ID" value="BAC25382.1"/>
    <property type="status" value="ALT_FRAME"/>
    <property type="molecule type" value="mRNA"/>
</dbReference>
<dbReference type="EMBL" id="AK089278">
    <property type="protein sequence ID" value="BAC40825.1"/>
    <property type="molecule type" value="mRNA"/>
</dbReference>
<dbReference type="EMBL" id="AK170068">
    <property type="protein sequence ID" value="BAE41544.1"/>
    <property type="molecule type" value="mRNA"/>
</dbReference>
<dbReference type="EMBL" id="BC019197">
    <property type="protein sequence ID" value="AAH19197.1"/>
    <property type="molecule type" value="mRNA"/>
</dbReference>
<dbReference type="CCDS" id="CCDS29889.1"/>
<dbReference type="RefSeq" id="NP_598507.3">
    <property type="nucleotide sequence ID" value="NM_133746.5"/>
</dbReference>
<dbReference type="SMR" id="Q8VEC4"/>
<dbReference type="BioGRID" id="215517">
    <property type="interactions" value="1"/>
</dbReference>
<dbReference type="FunCoup" id="Q8VEC4">
    <property type="interactions" value="66"/>
</dbReference>
<dbReference type="STRING" id="10090.ENSMUSP00000047278"/>
<dbReference type="PhosphoSitePlus" id="Q8VEC4"/>
<dbReference type="SwissPalm" id="Q8VEC4"/>
<dbReference type="PaxDb" id="10090-ENSMUSP00000047278"/>
<dbReference type="ProteomicsDB" id="273902"/>
<dbReference type="Pumba" id="Q8VEC4"/>
<dbReference type="Antibodypedia" id="18174">
    <property type="antibodies" value="22 antibodies from 12 providers"/>
</dbReference>
<dbReference type="DNASU" id="72691"/>
<dbReference type="Ensembl" id="ENSMUST00000035822.2">
    <property type="protein sequence ID" value="ENSMUSP00000047278.2"/>
    <property type="gene ID" value="ENSMUSG00000033033.11"/>
</dbReference>
<dbReference type="GeneID" id="72691"/>
<dbReference type="KEGG" id="mmu:72691"/>
<dbReference type="UCSC" id="uc008hur.2">
    <property type="organism name" value="mouse"/>
</dbReference>
<dbReference type="AGR" id="MGI:1919941"/>
<dbReference type="CTD" id="51063"/>
<dbReference type="MGI" id="MGI:1919941">
    <property type="gene designation" value="Calhm2"/>
</dbReference>
<dbReference type="VEuPathDB" id="HostDB:ENSMUSG00000033033"/>
<dbReference type="eggNOG" id="ENOG502QVU7">
    <property type="taxonomic scope" value="Eukaryota"/>
</dbReference>
<dbReference type="GeneTree" id="ENSGT01030000234610"/>
<dbReference type="HOGENOM" id="CLU_069286_1_0_1"/>
<dbReference type="InParanoid" id="Q8VEC4"/>
<dbReference type="OMA" id="LNTHTWN"/>
<dbReference type="OrthoDB" id="9865653at2759"/>
<dbReference type="PhylomeDB" id="Q8VEC4"/>
<dbReference type="TreeFam" id="TF329085"/>
<dbReference type="BioGRID-ORCS" id="72691">
    <property type="hits" value="2 hits in 76 CRISPR screens"/>
</dbReference>
<dbReference type="ChiTaRS" id="Calhm2">
    <property type="organism name" value="mouse"/>
</dbReference>
<dbReference type="PRO" id="PR:Q8VEC4"/>
<dbReference type="Proteomes" id="UP000000589">
    <property type="component" value="Chromosome 19"/>
</dbReference>
<dbReference type="RNAct" id="Q8VEC4">
    <property type="molecule type" value="protein"/>
</dbReference>
<dbReference type="Bgee" id="ENSMUSG00000033033">
    <property type="expression patterns" value="Expressed in spleen and 100 other cell types or tissues"/>
</dbReference>
<dbReference type="ExpressionAtlas" id="Q8VEC4">
    <property type="expression patterns" value="baseline and differential"/>
</dbReference>
<dbReference type="GO" id="GO:0005886">
    <property type="term" value="C:plasma membrane"/>
    <property type="evidence" value="ECO:0000314"/>
    <property type="project" value="UniProtKB"/>
</dbReference>
<dbReference type="GO" id="GO:1904669">
    <property type="term" value="P:ATP export"/>
    <property type="evidence" value="ECO:0000315"/>
    <property type="project" value="UniProtKB"/>
</dbReference>
<dbReference type="GO" id="GO:0070509">
    <property type="term" value="P:calcium ion import"/>
    <property type="evidence" value="ECO:0000315"/>
    <property type="project" value="UniProtKB"/>
</dbReference>
<dbReference type="GO" id="GO:0034220">
    <property type="term" value="P:monoatomic ion transmembrane transport"/>
    <property type="evidence" value="ECO:0007669"/>
    <property type="project" value="UniProtKB-KW"/>
</dbReference>
<dbReference type="GO" id="GO:0043065">
    <property type="term" value="P:positive regulation of apoptotic process"/>
    <property type="evidence" value="ECO:0000250"/>
    <property type="project" value="UniProtKB"/>
</dbReference>
<dbReference type="GO" id="GO:1903978">
    <property type="term" value="P:regulation of microglial cell activation"/>
    <property type="evidence" value="ECO:0000315"/>
    <property type="project" value="UniProtKB"/>
</dbReference>
<dbReference type="GO" id="GO:0048167">
    <property type="term" value="P:regulation of synaptic plasticity"/>
    <property type="evidence" value="ECO:0000315"/>
    <property type="project" value="UniProtKB"/>
</dbReference>
<dbReference type="InterPro" id="IPR029569">
    <property type="entry name" value="CALHM"/>
</dbReference>
<dbReference type="PANTHER" id="PTHR32261">
    <property type="entry name" value="CALCIUM HOMEOSTASIS MODULATOR PROTEIN"/>
    <property type="match status" value="1"/>
</dbReference>
<dbReference type="PANTHER" id="PTHR32261:SF3">
    <property type="entry name" value="CALCIUM HOMEOSTASIS MODULATOR PROTEIN 2"/>
    <property type="match status" value="1"/>
</dbReference>
<dbReference type="Pfam" id="PF14798">
    <property type="entry name" value="Ca_hom_mod"/>
    <property type="match status" value="1"/>
</dbReference>
<organism>
    <name type="scientific">Mus musculus</name>
    <name type="common">Mouse</name>
    <dbReference type="NCBI Taxonomy" id="10090"/>
    <lineage>
        <taxon>Eukaryota</taxon>
        <taxon>Metazoa</taxon>
        <taxon>Chordata</taxon>
        <taxon>Craniata</taxon>
        <taxon>Vertebrata</taxon>
        <taxon>Euteleostomi</taxon>
        <taxon>Mammalia</taxon>
        <taxon>Eutheria</taxon>
        <taxon>Euarchontoglires</taxon>
        <taxon>Glires</taxon>
        <taxon>Rodentia</taxon>
        <taxon>Myomorpha</taxon>
        <taxon>Muroidea</taxon>
        <taxon>Muridae</taxon>
        <taxon>Murinae</taxon>
        <taxon>Mus</taxon>
        <taxon>Mus</taxon>
    </lineage>
</organism>
<feature type="chain" id="PRO_0000186721" description="Calcium homeostasis modulator protein 2">
    <location>
        <begin position="1"/>
        <end position="323"/>
    </location>
</feature>
<feature type="topological domain" description="Cytoplasmic" evidence="6">
    <location>
        <begin position="1"/>
        <end position="21"/>
    </location>
</feature>
<feature type="transmembrane region" description="Helical; Name=S1" evidence="1">
    <location>
        <begin position="22"/>
        <end position="43"/>
    </location>
</feature>
<feature type="topological domain" description="Extracellular" evidence="6">
    <location>
        <begin position="44"/>
        <end position="52"/>
    </location>
</feature>
<feature type="transmembrane region" description="Helical; Name=S2" evidence="1">
    <location>
        <begin position="53"/>
        <end position="76"/>
    </location>
</feature>
<feature type="topological domain" description="Cytoplasmic" evidence="6">
    <location>
        <begin position="77"/>
        <end position="101"/>
    </location>
</feature>
<feature type="transmembrane region" description="Helical; Name=S3" evidence="1">
    <location>
        <begin position="102"/>
        <end position="132"/>
    </location>
</feature>
<feature type="topological domain" description="Extracellular" evidence="6">
    <location>
        <begin position="133"/>
        <end position="179"/>
    </location>
</feature>
<feature type="transmembrane region" description="Helical; Name=S4" evidence="1">
    <location>
        <begin position="180"/>
        <end position="206"/>
    </location>
</feature>
<feature type="topological domain" description="Cytoplasmic" evidence="6">
    <location>
        <begin position="207"/>
        <end position="323"/>
    </location>
</feature>
<feature type="region of interest" description="Central pore" evidence="1">
    <location>
        <begin position="14"/>
        <end position="39"/>
    </location>
</feature>
<feature type="region of interest" description="Hemichannel docking" evidence="1">
    <location>
        <begin position="145"/>
        <end position="152"/>
    </location>
</feature>
<feature type="region of interest" description="Intersubunit interaction" evidence="1">
    <location>
        <begin position="214"/>
        <end position="251"/>
    </location>
</feature>
<feature type="site" description="Not N-glycosylated" evidence="1">
    <location>
        <position position="168"/>
    </location>
</feature>
<feature type="disulfide bond" evidence="1">
    <location>
        <begin position="46"/>
        <end position="130"/>
    </location>
</feature>
<feature type="disulfide bond" evidence="1">
    <location>
        <begin position="48"/>
        <end position="162"/>
    </location>
</feature>
<feature type="mutagenesis site" description="Decreases ATP release." evidence="3">
    <original>Q</original>
    <variation>A</variation>
    <location>
        <position position="87"/>
    </location>
</feature>
<feature type="mutagenesis site" description="Does not affect ATP release." evidence="3">
    <original>L</original>
    <variation>A</variation>
    <location>
        <position position="103"/>
    </location>
</feature>
<feature type="mutagenesis site" description="Does not affect ATP release." evidence="3">
    <original>S</original>
    <variation>A</variation>
    <location>
        <position position="105"/>
    </location>
</feature>
<feature type="mutagenesis site" description="Decreases ATP release." evidence="3">
    <original>L</original>
    <variation>A</variation>
    <location>
        <position position="132"/>
    </location>
</feature>
<feature type="sequence conflict" description="In Ref. 1; BAC25382." evidence="6" ref="1">
    <original>A</original>
    <variation>P</variation>
    <location>
        <position position="97"/>
    </location>
</feature>
<feature type="sequence conflict" description="In Ref. 1; BAC40825." evidence="6" ref="1">
    <original>R</original>
    <variation>S</variation>
    <location>
        <position position="109"/>
    </location>
</feature>
<feature type="sequence conflict" description="In Ref. 1; BAC25382." evidence="6" ref="1">
    <original>DKGF</original>
    <variation>IKLP</variation>
    <location>
        <begin position="145"/>
        <end position="148"/>
    </location>
</feature>
<comment type="function">
    <text evidence="1 3 4">Pore-forming subunit of Ca(2+) homeostasis modulator channels. Mediates ATP release from astrocytes and ATP-induced Ca(2+) influx in microglia thus regulating neuronal ATP and Ca(2+) homeostasis, synaptic transmission and neuroinflammatory response. May form intercellular gap junctions. The gating mechanism remains unknown.</text>
</comment>
<comment type="catalytic activity">
    <reaction evidence="3">
        <text>ATP(in) = ATP(out)</text>
        <dbReference type="Rhea" id="RHEA:75687"/>
        <dbReference type="ChEBI" id="CHEBI:30616"/>
    </reaction>
    <physiologicalReaction direction="left-to-right" evidence="7">
        <dbReference type="Rhea" id="RHEA:75688"/>
    </physiologicalReaction>
</comment>
<comment type="activity regulation">
    <text evidence="3">Inhibited by divalent cations such as Co(2+) and Ni(2+).</text>
</comment>
<comment type="subunit">
    <text evidence="1">Homo-undecamer. Two undecameric hemichannels can assemble in a head-to-head manner to form a gap junction.</text>
</comment>
<comment type="subcellular location">
    <subcellularLocation>
        <location evidence="3">Cell membrane</location>
        <topology evidence="2">Multi-pass membrane protein</topology>
    </subcellularLocation>
</comment>
<comment type="tissue specificity">
    <text evidence="4">Neuron, astrocyte, and microglia.</text>
</comment>
<comment type="disruption phenotype">
    <text evidence="3 4">Deficiency causes dendritic spine loss associated with neuronal dysfunction. In a mouse model of Alzheimer's disease (5xFAD), it confers resistance to neuroinflammation and related cognitive impairments.</text>
</comment>
<comment type="similarity">
    <text evidence="6">Belongs to the CALHM family.</text>
</comment>
<comment type="sequence caution" evidence="6">
    <conflict type="frameshift">
        <sequence resource="EMBL-CDS" id="BAC25382"/>
    </conflict>
</comment>
<gene>
    <name evidence="5 8" type="primary">Calhm2</name>
    <name type="synonym">Fam26b</name>
</gene>
<proteinExistence type="evidence at protein level"/>
<evidence type="ECO:0000250" key="1">
    <source>
        <dbReference type="UniProtKB" id="Q9HA72"/>
    </source>
</evidence>
<evidence type="ECO:0000255" key="2"/>
<evidence type="ECO:0000269" key="3">
    <source>
    </source>
</evidence>
<evidence type="ECO:0000269" key="4">
    <source>
    </source>
</evidence>
<evidence type="ECO:0000303" key="5">
    <source>
    </source>
</evidence>
<evidence type="ECO:0000305" key="6"/>
<evidence type="ECO:0000305" key="7">
    <source>
    </source>
</evidence>
<evidence type="ECO:0000312" key="8">
    <source>
        <dbReference type="MGI" id="MGI:1919941"/>
    </source>
</evidence>